<proteinExistence type="inferred from homology"/>
<name>TYSY_STRPJ</name>
<feature type="chain" id="PRO_1000197262" description="Thymidylate synthase">
    <location>
        <begin position="1"/>
        <end position="279"/>
    </location>
</feature>
<feature type="active site" description="Nucleophile" evidence="1">
    <location>
        <position position="154"/>
    </location>
</feature>
<feature type="binding site" evidence="1">
    <location>
        <begin position="133"/>
        <end position="134"/>
    </location>
    <ligand>
        <name>dUMP</name>
        <dbReference type="ChEBI" id="CHEBI:246422"/>
        <note>ligand shared between dimeric partners</note>
    </ligand>
</feature>
<feature type="binding site" description="in other chain" evidence="1">
    <location>
        <begin position="178"/>
        <end position="181"/>
    </location>
    <ligand>
        <name>dUMP</name>
        <dbReference type="ChEBI" id="CHEBI:246422"/>
        <note>ligand shared between dimeric partners</note>
    </ligand>
</feature>
<feature type="binding site" evidence="1">
    <location>
        <position position="181"/>
    </location>
    <ligand>
        <name>(6R)-5,10-methylene-5,6,7,8-tetrahydrofolate</name>
        <dbReference type="ChEBI" id="CHEBI:15636"/>
    </ligand>
</feature>
<feature type="binding site" description="in other chain" evidence="1">
    <location>
        <position position="189"/>
    </location>
    <ligand>
        <name>dUMP</name>
        <dbReference type="ChEBI" id="CHEBI:246422"/>
        <note>ligand shared between dimeric partners</note>
    </ligand>
</feature>
<feature type="binding site" description="in other chain" evidence="1">
    <location>
        <begin position="219"/>
        <end position="221"/>
    </location>
    <ligand>
        <name>dUMP</name>
        <dbReference type="ChEBI" id="CHEBI:246422"/>
        <note>ligand shared between dimeric partners</note>
    </ligand>
</feature>
<feature type="binding site" evidence="1">
    <location>
        <position position="278"/>
    </location>
    <ligand>
        <name>(6R)-5,10-methylene-5,6,7,8-tetrahydrofolate</name>
        <dbReference type="ChEBI" id="CHEBI:15636"/>
    </ligand>
</feature>
<organism>
    <name type="scientific">Streptococcus pneumoniae (strain ATCC 700669 / Spain 23F-1)</name>
    <dbReference type="NCBI Taxonomy" id="561276"/>
    <lineage>
        <taxon>Bacteria</taxon>
        <taxon>Bacillati</taxon>
        <taxon>Bacillota</taxon>
        <taxon>Bacilli</taxon>
        <taxon>Lactobacillales</taxon>
        <taxon>Streptococcaceae</taxon>
        <taxon>Streptococcus</taxon>
    </lineage>
</organism>
<comment type="function">
    <text evidence="1">Catalyzes the reductive methylation of 2'-deoxyuridine-5'-monophosphate (dUMP) to 2'-deoxythymidine-5'-monophosphate (dTMP) while utilizing 5,10-methylenetetrahydrofolate (mTHF) as the methyl donor and reductant in the reaction, yielding dihydrofolate (DHF) as a by-product. This enzymatic reaction provides an intracellular de novo source of dTMP, an essential precursor for DNA biosynthesis.</text>
</comment>
<comment type="catalytic activity">
    <reaction evidence="1">
        <text>dUMP + (6R)-5,10-methylene-5,6,7,8-tetrahydrofolate = 7,8-dihydrofolate + dTMP</text>
        <dbReference type="Rhea" id="RHEA:12104"/>
        <dbReference type="ChEBI" id="CHEBI:15636"/>
        <dbReference type="ChEBI" id="CHEBI:57451"/>
        <dbReference type="ChEBI" id="CHEBI:63528"/>
        <dbReference type="ChEBI" id="CHEBI:246422"/>
        <dbReference type="EC" id="2.1.1.45"/>
    </reaction>
</comment>
<comment type="pathway">
    <text evidence="1">Pyrimidine metabolism; dTTP biosynthesis.</text>
</comment>
<comment type="subunit">
    <text evidence="1">Homodimer.</text>
</comment>
<comment type="subcellular location">
    <subcellularLocation>
        <location evidence="1">Cytoplasm</location>
    </subcellularLocation>
</comment>
<comment type="similarity">
    <text evidence="1">Belongs to the thymidylate synthase family. Bacterial-type ThyA subfamily.</text>
</comment>
<accession>B8ZMQ1</accession>
<keyword id="KW-0963">Cytoplasm</keyword>
<keyword id="KW-0489">Methyltransferase</keyword>
<keyword id="KW-0545">Nucleotide biosynthesis</keyword>
<keyword id="KW-0808">Transferase</keyword>
<protein>
    <recommendedName>
        <fullName evidence="1">Thymidylate synthase</fullName>
        <shortName evidence="1">TS</shortName>
        <shortName evidence="1">TSase</shortName>
        <ecNumber evidence="1">2.1.1.45</ecNumber>
    </recommendedName>
</protein>
<gene>
    <name evidence="1" type="primary">thyA</name>
    <name type="ordered locus">SPN23F06050</name>
</gene>
<dbReference type="EC" id="2.1.1.45" evidence="1"/>
<dbReference type="EMBL" id="FM211187">
    <property type="protein sequence ID" value="CAR68454.1"/>
    <property type="molecule type" value="Genomic_DNA"/>
</dbReference>
<dbReference type="RefSeq" id="WP_000158602.1">
    <property type="nucleotide sequence ID" value="NC_011900.1"/>
</dbReference>
<dbReference type="SMR" id="B8ZMQ1"/>
<dbReference type="KEGG" id="sne:SPN23F06050"/>
<dbReference type="HOGENOM" id="CLU_021669_0_0_9"/>
<dbReference type="UniPathway" id="UPA00575"/>
<dbReference type="GO" id="GO:0005829">
    <property type="term" value="C:cytosol"/>
    <property type="evidence" value="ECO:0007669"/>
    <property type="project" value="TreeGrafter"/>
</dbReference>
<dbReference type="GO" id="GO:0004799">
    <property type="term" value="F:thymidylate synthase activity"/>
    <property type="evidence" value="ECO:0007669"/>
    <property type="project" value="UniProtKB-UniRule"/>
</dbReference>
<dbReference type="GO" id="GO:0006231">
    <property type="term" value="P:dTMP biosynthetic process"/>
    <property type="evidence" value="ECO:0007669"/>
    <property type="project" value="UniProtKB-UniRule"/>
</dbReference>
<dbReference type="GO" id="GO:0006235">
    <property type="term" value="P:dTTP biosynthetic process"/>
    <property type="evidence" value="ECO:0007669"/>
    <property type="project" value="UniProtKB-UniRule"/>
</dbReference>
<dbReference type="GO" id="GO:0032259">
    <property type="term" value="P:methylation"/>
    <property type="evidence" value="ECO:0007669"/>
    <property type="project" value="UniProtKB-KW"/>
</dbReference>
<dbReference type="CDD" id="cd00351">
    <property type="entry name" value="TS_Pyrimidine_HMase"/>
    <property type="match status" value="1"/>
</dbReference>
<dbReference type="FunFam" id="3.30.572.10:FF:000006">
    <property type="entry name" value="Thymidylate synthase"/>
    <property type="match status" value="1"/>
</dbReference>
<dbReference type="Gene3D" id="3.30.572.10">
    <property type="entry name" value="Thymidylate synthase/dCMP hydroxymethylase domain"/>
    <property type="match status" value="1"/>
</dbReference>
<dbReference type="HAMAP" id="MF_00008">
    <property type="entry name" value="Thymidy_synth_bact"/>
    <property type="match status" value="1"/>
</dbReference>
<dbReference type="InterPro" id="IPR045097">
    <property type="entry name" value="Thymidate_synth/dCMP_Mease"/>
</dbReference>
<dbReference type="InterPro" id="IPR023451">
    <property type="entry name" value="Thymidate_synth/dCMP_Mease_dom"/>
</dbReference>
<dbReference type="InterPro" id="IPR036926">
    <property type="entry name" value="Thymidate_synth/dCMP_Mease_sf"/>
</dbReference>
<dbReference type="InterPro" id="IPR000398">
    <property type="entry name" value="Thymidylate_synthase"/>
</dbReference>
<dbReference type="InterPro" id="IPR020940">
    <property type="entry name" value="Thymidylate_synthase_AS"/>
</dbReference>
<dbReference type="NCBIfam" id="NF002495">
    <property type="entry name" value="PRK01827.1-1"/>
    <property type="match status" value="1"/>
</dbReference>
<dbReference type="PANTHER" id="PTHR11548">
    <property type="entry name" value="THYMIDYLATE SYNTHASE 1"/>
    <property type="match status" value="1"/>
</dbReference>
<dbReference type="PANTHER" id="PTHR11548:SF1">
    <property type="entry name" value="THYMIDYLATE SYNTHASE 1"/>
    <property type="match status" value="1"/>
</dbReference>
<dbReference type="Pfam" id="PF00303">
    <property type="entry name" value="Thymidylat_synt"/>
    <property type="match status" value="1"/>
</dbReference>
<dbReference type="PRINTS" id="PR00108">
    <property type="entry name" value="THYMDSNTHASE"/>
</dbReference>
<dbReference type="SUPFAM" id="SSF55831">
    <property type="entry name" value="Thymidylate synthase/dCMP hydroxymethylase"/>
    <property type="match status" value="1"/>
</dbReference>
<dbReference type="PROSITE" id="PS00091">
    <property type="entry name" value="THYMIDYLATE_SYNTHASE"/>
    <property type="match status" value="1"/>
</dbReference>
<reference key="1">
    <citation type="journal article" date="2009" name="J. Bacteriol.">
        <title>Role of conjugative elements in the evolution of the multidrug-resistant pandemic clone Streptococcus pneumoniae Spain23F ST81.</title>
        <authorList>
            <person name="Croucher N.J."/>
            <person name="Walker D."/>
            <person name="Romero P."/>
            <person name="Lennard N."/>
            <person name="Paterson G.K."/>
            <person name="Bason N.C."/>
            <person name="Mitchell A.M."/>
            <person name="Quail M.A."/>
            <person name="Andrew P.W."/>
            <person name="Parkhill J."/>
            <person name="Bentley S.D."/>
            <person name="Mitchell T.J."/>
        </authorList>
    </citation>
    <scope>NUCLEOTIDE SEQUENCE [LARGE SCALE GENOMIC DNA]</scope>
    <source>
        <strain>ATCC 700669 / Spain 23F-1</strain>
    </source>
</reference>
<evidence type="ECO:0000255" key="1">
    <source>
        <dbReference type="HAMAP-Rule" id="MF_00008"/>
    </source>
</evidence>
<sequence length="279" mass="32501">MTKADTIFKENIECILKEGVFSEQARPKYKDGTVANSKYVTGAFSEYDLSKGEFPITTLRPIAIKSAIKEVLWIYQDQSNSLEVLNDKYNVHYWNDWEVGDTGTIGERYGAVVKKHDIINKLLKQLETNPWNRRNIISLWDYQAFEETDGLLPCAFQTMFDVRRVDGEIYLDATLTQRSNDMLVAHHINAMQYVALQMMIAKHFGWKVGKFFYFINNLHIYDNQFEQAQELLRREPSNCQPRLVLNVPDGTNFFDIKAEDFELVDYDPVKPQLKFDLAI</sequence>